<feature type="chain" id="PRO_0000316201" description="AP-1 complex subunit sigma-1">
    <location>
        <begin position="1"/>
        <end position="162"/>
    </location>
</feature>
<gene>
    <name type="primary">vas2</name>
    <name type="synonym">aps1</name>
    <name type="ORF">SPAP27G11.06c</name>
</gene>
<accession>Q9P7N2</accession>
<reference key="1">
    <citation type="journal article" date="2002" name="Nature">
        <title>The genome sequence of Schizosaccharomyces pombe.</title>
        <authorList>
            <person name="Wood V."/>
            <person name="Gwilliam R."/>
            <person name="Rajandream M.A."/>
            <person name="Lyne M.H."/>
            <person name="Lyne R."/>
            <person name="Stewart A."/>
            <person name="Sgouros J.G."/>
            <person name="Peat N."/>
            <person name="Hayles J."/>
            <person name="Baker S.G."/>
            <person name="Basham D."/>
            <person name="Bowman S."/>
            <person name="Brooks K."/>
            <person name="Brown D."/>
            <person name="Brown S."/>
            <person name="Chillingworth T."/>
            <person name="Churcher C.M."/>
            <person name="Collins M."/>
            <person name="Connor R."/>
            <person name="Cronin A."/>
            <person name="Davis P."/>
            <person name="Feltwell T."/>
            <person name="Fraser A."/>
            <person name="Gentles S."/>
            <person name="Goble A."/>
            <person name="Hamlin N."/>
            <person name="Harris D.E."/>
            <person name="Hidalgo J."/>
            <person name="Hodgson G."/>
            <person name="Holroyd S."/>
            <person name="Hornsby T."/>
            <person name="Howarth S."/>
            <person name="Huckle E.J."/>
            <person name="Hunt S."/>
            <person name="Jagels K."/>
            <person name="James K.D."/>
            <person name="Jones L."/>
            <person name="Jones M."/>
            <person name="Leather S."/>
            <person name="McDonald S."/>
            <person name="McLean J."/>
            <person name="Mooney P."/>
            <person name="Moule S."/>
            <person name="Mungall K.L."/>
            <person name="Murphy L.D."/>
            <person name="Niblett D."/>
            <person name="Odell C."/>
            <person name="Oliver K."/>
            <person name="O'Neil S."/>
            <person name="Pearson D."/>
            <person name="Quail M.A."/>
            <person name="Rabbinowitsch E."/>
            <person name="Rutherford K.M."/>
            <person name="Rutter S."/>
            <person name="Saunders D."/>
            <person name="Seeger K."/>
            <person name="Sharp S."/>
            <person name="Skelton J."/>
            <person name="Simmonds M.N."/>
            <person name="Squares R."/>
            <person name="Squares S."/>
            <person name="Stevens K."/>
            <person name="Taylor K."/>
            <person name="Taylor R.G."/>
            <person name="Tivey A."/>
            <person name="Walsh S.V."/>
            <person name="Warren T."/>
            <person name="Whitehead S."/>
            <person name="Woodward J.R."/>
            <person name="Volckaert G."/>
            <person name="Aert R."/>
            <person name="Robben J."/>
            <person name="Grymonprez B."/>
            <person name="Weltjens I."/>
            <person name="Vanstreels E."/>
            <person name="Rieger M."/>
            <person name="Schaefer M."/>
            <person name="Mueller-Auer S."/>
            <person name="Gabel C."/>
            <person name="Fuchs M."/>
            <person name="Duesterhoeft A."/>
            <person name="Fritzc C."/>
            <person name="Holzer E."/>
            <person name="Moestl D."/>
            <person name="Hilbert H."/>
            <person name="Borzym K."/>
            <person name="Langer I."/>
            <person name="Beck A."/>
            <person name="Lehrach H."/>
            <person name="Reinhardt R."/>
            <person name="Pohl T.M."/>
            <person name="Eger P."/>
            <person name="Zimmermann W."/>
            <person name="Wedler H."/>
            <person name="Wambutt R."/>
            <person name="Purnelle B."/>
            <person name="Goffeau A."/>
            <person name="Cadieu E."/>
            <person name="Dreano S."/>
            <person name="Gloux S."/>
            <person name="Lelaure V."/>
            <person name="Mottier S."/>
            <person name="Galibert F."/>
            <person name="Aves S.J."/>
            <person name="Xiang Z."/>
            <person name="Hunt C."/>
            <person name="Moore K."/>
            <person name="Hurst S.M."/>
            <person name="Lucas M."/>
            <person name="Rochet M."/>
            <person name="Gaillardin C."/>
            <person name="Tallada V.A."/>
            <person name="Garzon A."/>
            <person name="Thode G."/>
            <person name="Daga R.R."/>
            <person name="Cruzado L."/>
            <person name="Jimenez J."/>
            <person name="Sanchez M."/>
            <person name="del Rey F."/>
            <person name="Benito J."/>
            <person name="Dominguez A."/>
            <person name="Revuelta J.L."/>
            <person name="Moreno S."/>
            <person name="Armstrong J."/>
            <person name="Forsburg S.L."/>
            <person name="Cerutti L."/>
            <person name="Lowe T."/>
            <person name="McCombie W.R."/>
            <person name="Paulsen I."/>
            <person name="Potashkin J."/>
            <person name="Shpakovski G.V."/>
            <person name="Ussery D."/>
            <person name="Barrell B.G."/>
            <person name="Nurse P."/>
        </authorList>
    </citation>
    <scope>NUCLEOTIDE SEQUENCE [LARGE SCALE GENOMIC DNA]</scope>
    <source>
        <strain>972 / ATCC 24843</strain>
    </source>
</reference>
<reference key="2">
    <citation type="journal article" date="2006" name="Nat. Biotechnol.">
        <title>ORFeome cloning and global analysis of protein localization in the fission yeast Schizosaccharomyces pombe.</title>
        <authorList>
            <person name="Matsuyama A."/>
            <person name="Arai R."/>
            <person name="Yashiroda Y."/>
            <person name="Shirai A."/>
            <person name="Kamata A."/>
            <person name="Sekido S."/>
            <person name="Kobayashi Y."/>
            <person name="Hashimoto A."/>
            <person name="Hamamoto M."/>
            <person name="Hiraoka Y."/>
            <person name="Horinouchi S."/>
            <person name="Yoshida M."/>
        </authorList>
    </citation>
    <scope>SUBCELLULAR LOCATION [LARGE SCALE ANALYSIS]</scope>
</reference>
<reference key="3">
    <citation type="journal article" date="2009" name="Genes Cells">
        <title>Deletion mutants of AP-1 adaptin subunits display distinct phenotypes in fission yeast.</title>
        <authorList>
            <person name="Ma Y."/>
            <person name="Takeuchi M."/>
            <person name="Sugiura R."/>
            <person name="Sio S.O."/>
            <person name="Kuno T."/>
        </authorList>
    </citation>
    <scope>DISRUPTION PHENOTYPE</scope>
    <scope>IDENTIFICATION IN THE AP-1 COMPLEX</scope>
    <scope>SUBCELLULAR LOCATION</scope>
    <scope>FUNCTION</scope>
</reference>
<evidence type="ECO:0000250" key="1"/>
<evidence type="ECO:0000269" key="2">
    <source>
    </source>
</evidence>
<evidence type="ECO:0000269" key="3">
    <source>
    </source>
</evidence>
<evidence type="ECO:0000305" key="4"/>
<dbReference type="EMBL" id="CU329670">
    <property type="protein sequence ID" value="CAB76027.1"/>
    <property type="molecule type" value="Genomic_DNA"/>
</dbReference>
<dbReference type="RefSeq" id="NP_593410.1">
    <property type="nucleotide sequence ID" value="NM_001018843.2"/>
</dbReference>
<dbReference type="SMR" id="Q9P7N2"/>
<dbReference type="BioGRID" id="279330">
    <property type="interactions" value="3"/>
</dbReference>
<dbReference type="FunCoup" id="Q9P7N2">
    <property type="interactions" value="442"/>
</dbReference>
<dbReference type="STRING" id="284812.Q9P7N2"/>
<dbReference type="PaxDb" id="4896-SPAP27G11.06c.1"/>
<dbReference type="EnsemblFungi" id="SPAP27G11.06c.1">
    <property type="protein sequence ID" value="SPAP27G11.06c.1:pep"/>
    <property type="gene ID" value="SPAP27G11.06c"/>
</dbReference>
<dbReference type="GeneID" id="2542885"/>
<dbReference type="KEGG" id="spo:2542885"/>
<dbReference type="PomBase" id="SPAP27G11.06c">
    <property type="gene designation" value="vas2"/>
</dbReference>
<dbReference type="VEuPathDB" id="FungiDB:SPAP27G11.06c"/>
<dbReference type="eggNOG" id="KOG0934">
    <property type="taxonomic scope" value="Eukaryota"/>
</dbReference>
<dbReference type="HOGENOM" id="CLU_061221_1_3_1"/>
<dbReference type="InParanoid" id="Q9P7N2"/>
<dbReference type="OMA" id="KAYHILD"/>
<dbReference type="PhylomeDB" id="Q9P7N2"/>
<dbReference type="Reactome" id="R-SPO-432720">
    <property type="pathway name" value="Lysosome Vesicle Biogenesis"/>
</dbReference>
<dbReference type="PRO" id="PR:Q9P7N2"/>
<dbReference type="Proteomes" id="UP000002485">
    <property type="component" value="Chromosome I"/>
</dbReference>
<dbReference type="GO" id="GO:0030121">
    <property type="term" value="C:AP-1 adaptor complex"/>
    <property type="evidence" value="ECO:0000314"/>
    <property type="project" value="PomBase"/>
</dbReference>
<dbReference type="GO" id="GO:0005829">
    <property type="term" value="C:cytosol"/>
    <property type="evidence" value="ECO:0007005"/>
    <property type="project" value="PomBase"/>
</dbReference>
<dbReference type="GO" id="GO:0005768">
    <property type="term" value="C:endosome"/>
    <property type="evidence" value="ECO:0000314"/>
    <property type="project" value="PomBase"/>
</dbReference>
<dbReference type="GO" id="GO:0005794">
    <property type="term" value="C:Golgi apparatus"/>
    <property type="evidence" value="ECO:0000314"/>
    <property type="project" value="PomBase"/>
</dbReference>
<dbReference type="GO" id="GO:0043231">
    <property type="term" value="C:intracellular membrane-bounded organelle"/>
    <property type="evidence" value="ECO:0000318"/>
    <property type="project" value="GO_Central"/>
</dbReference>
<dbReference type="GO" id="GO:0005634">
    <property type="term" value="C:nucleus"/>
    <property type="evidence" value="ECO:0007005"/>
    <property type="project" value="PomBase"/>
</dbReference>
<dbReference type="GO" id="GO:0035615">
    <property type="term" value="F:clathrin adaptor activity"/>
    <property type="evidence" value="ECO:0007669"/>
    <property type="project" value="InterPro"/>
</dbReference>
<dbReference type="GO" id="GO:0030276">
    <property type="term" value="F:clathrin binding"/>
    <property type="evidence" value="ECO:0000266"/>
    <property type="project" value="PomBase"/>
</dbReference>
<dbReference type="GO" id="GO:0099638">
    <property type="term" value="P:endosome to plasma membrane protein transport"/>
    <property type="evidence" value="ECO:0000314"/>
    <property type="project" value="PomBase"/>
</dbReference>
<dbReference type="GO" id="GO:0042147">
    <property type="term" value="P:retrograde transport, endosome to Golgi"/>
    <property type="evidence" value="ECO:0000314"/>
    <property type="project" value="PomBase"/>
</dbReference>
<dbReference type="GO" id="GO:0016192">
    <property type="term" value="P:vesicle-mediated transport"/>
    <property type="evidence" value="ECO:0000318"/>
    <property type="project" value="GO_Central"/>
</dbReference>
<dbReference type="CDD" id="cd14831">
    <property type="entry name" value="AP1_sigma"/>
    <property type="match status" value="1"/>
</dbReference>
<dbReference type="FunFam" id="3.30.450.60:FF:000007">
    <property type="entry name" value="AP complex subunit sigma"/>
    <property type="match status" value="1"/>
</dbReference>
<dbReference type="Gene3D" id="3.30.450.60">
    <property type="match status" value="1"/>
</dbReference>
<dbReference type="InterPro" id="IPR044733">
    <property type="entry name" value="AP1_sigma"/>
</dbReference>
<dbReference type="InterPro" id="IPR016635">
    <property type="entry name" value="AP_complex_ssu"/>
</dbReference>
<dbReference type="InterPro" id="IPR022775">
    <property type="entry name" value="AP_mu_sigma_su"/>
</dbReference>
<dbReference type="InterPro" id="IPR011012">
    <property type="entry name" value="Longin-like_dom_sf"/>
</dbReference>
<dbReference type="PANTHER" id="PTHR11753">
    <property type="entry name" value="ADAPTOR COMPLEXES SMALL SUBUNIT FAMILY"/>
    <property type="match status" value="1"/>
</dbReference>
<dbReference type="Pfam" id="PF01217">
    <property type="entry name" value="Clat_adaptor_s"/>
    <property type="match status" value="1"/>
</dbReference>
<dbReference type="PIRSF" id="PIRSF015588">
    <property type="entry name" value="AP_complex_sigma"/>
    <property type="match status" value="1"/>
</dbReference>
<dbReference type="SUPFAM" id="SSF64356">
    <property type="entry name" value="SNARE-like"/>
    <property type="match status" value="1"/>
</dbReference>
<organism>
    <name type="scientific">Schizosaccharomyces pombe (strain 972 / ATCC 24843)</name>
    <name type="common">Fission yeast</name>
    <dbReference type="NCBI Taxonomy" id="284812"/>
    <lineage>
        <taxon>Eukaryota</taxon>
        <taxon>Fungi</taxon>
        <taxon>Dikarya</taxon>
        <taxon>Ascomycota</taxon>
        <taxon>Taphrinomycotina</taxon>
        <taxon>Schizosaccharomycetes</taxon>
        <taxon>Schizosaccharomycetales</taxon>
        <taxon>Schizosaccharomycetaceae</taxon>
        <taxon>Schizosaccharomyces</taxon>
    </lineage>
</organism>
<name>AP1S1_SCHPO</name>
<comment type="function">
    <text evidence="3">Component of the AP-1 complex which links clathrin to receptors in coated vesicles. Clathrin-associated protein complexes are believed to interact with the cytoplasmic tails of membrane proteins, leading to their selection and concentration.</text>
</comment>
<comment type="subunit">
    <text evidence="1">Adaptor protein complex 1 (AP-1) is a heterotetramer composed of two large adaptins (gamma-type subunit apl4 and beta-type subunit apl2), a medium adaptin (mu-type subunit apm1) and a small adaptin (sigma-type subunit aps1). AP-1 interacts with clathrin (By similarity).</text>
</comment>
<comment type="subcellular location">
    <subcellularLocation>
        <location evidence="2">Cytoplasm</location>
    </subcellularLocation>
    <subcellularLocation>
        <location evidence="2">Nucleus</location>
    </subcellularLocation>
    <subcellularLocation>
        <location evidence="3 4">Cytoplasmic vesicle</location>
        <location evidence="3 4">Clathrin-coated vesicle membrane</location>
    </subcellularLocation>
    <subcellularLocation>
        <location evidence="3">Endosome</location>
    </subcellularLocation>
    <subcellularLocation>
        <location evidence="3">Golgi apparatus</location>
    </subcellularLocation>
</comment>
<comment type="disruption phenotype">
    <text evidence="3">Leads to hypersensitivity to valproic acid.</text>
</comment>
<comment type="similarity">
    <text evidence="4">Belongs to the adaptor complexes small subunit family.</text>
</comment>
<proteinExistence type="evidence at protein level"/>
<protein>
    <recommendedName>
        <fullName>AP-1 complex subunit sigma-1</fullName>
    </recommendedName>
    <alternativeName>
        <fullName>Sigma1-adaptin</fullName>
    </alternativeName>
    <alternativeName>
        <fullName>Valproic acid-sensitive protein 2</fullName>
    </alternativeName>
</protein>
<keyword id="KW-0963">Cytoplasm</keyword>
<keyword id="KW-0968">Cytoplasmic vesicle</keyword>
<keyword id="KW-0967">Endosome</keyword>
<keyword id="KW-0333">Golgi apparatus</keyword>
<keyword id="KW-0472">Membrane</keyword>
<keyword id="KW-0539">Nucleus</keyword>
<keyword id="KW-0653">Protein transport</keyword>
<keyword id="KW-1185">Reference proteome</keyword>
<keyword id="KW-0813">Transport</keyword>
<sequence>MSIKFFLLVSRQGKVRLAKWFNTLSIKERAKIIRDVSSLVITRKPKMCNFVEYKGEKIVYRRYASLFFVCGIEQDDNELIILEVIHKFVECLDKYFGNVCELDLIFNFEKAYYVMEELLLAGELQESSKTNVLSAVLAGDAESEADAQQDSLQKLVGSVKKR</sequence>